<evidence type="ECO:0000255" key="1">
    <source>
        <dbReference type="HAMAP-Rule" id="MF_01582"/>
    </source>
</evidence>
<name>SSTT_STRPG</name>
<feature type="chain" id="PRO_0000309145" description="Serine/threonine transporter SstT">
    <location>
        <begin position="1"/>
        <end position="404"/>
    </location>
</feature>
<feature type="transmembrane region" description="Helical" evidence="1">
    <location>
        <begin position="17"/>
        <end position="37"/>
    </location>
</feature>
<feature type="transmembrane region" description="Helical" evidence="1">
    <location>
        <begin position="39"/>
        <end position="59"/>
    </location>
</feature>
<feature type="transmembrane region" description="Helical" evidence="1">
    <location>
        <begin position="75"/>
        <end position="95"/>
    </location>
</feature>
<feature type="transmembrane region" description="Helical" evidence="1">
    <location>
        <begin position="138"/>
        <end position="158"/>
    </location>
</feature>
<feature type="transmembrane region" description="Helical" evidence="1">
    <location>
        <begin position="179"/>
        <end position="199"/>
    </location>
</feature>
<feature type="transmembrane region" description="Helical" evidence="1">
    <location>
        <begin position="212"/>
        <end position="232"/>
    </location>
</feature>
<feature type="transmembrane region" description="Helical" evidence="1">
    <location>
        <begin position="287"/>
        <end position="307"/>
    </location>
</feature>
<feature type="transmembrane region" description="Helical" evidence="1">
    <location>
        <begin position="313"/>
        <end position="333"/>
    </location>
</feature>
<protein>
    <recommendedName>
        <fullName evidence="1">Serine/threonine transporter SstT</fullName>
    </recommendedName>
    <alternativeName>
        <fullName evidence="1">Na(+)/serine-threonine symporter</fullName>
    </alternativeName>
</protein>
<sequence length="404" mass="42616">MKKIYDLWVRVSLIKKIGIGVVIGVMLGILAPDLTGFSILGKLFVGGLKAIAPLLVFALVSQAISHQKKGRQTNMTLIIFLYLFGTFASALVAVLTAYLFPLTLVLNTPVNTELSPPQGVAEVFQSLLLKLVDNPINALATANYIGVLSWAIIFGLALKAASQETKHLIKTAAEVTSQIVVWIINLAPIGIMSLVFTTISENGVGILSDYAFLILVLVGTMVFVALVVNPLIAVLITRQNPYPLVLRCLRESGLTAFFTRSSAANIPVNMQLCQKIGLSKDTYSVSIPLGATINMGGAAITINVLTLAAVHTFGIPIDFLTALLLSVVAAVSACGASGVAGGSLLLIPVACSLFGISNDLAMQVVGVGFIVGVIQDSCETALNSSTDVLFTAIAENAFWKRKKA</sequence>
<dbReference type="EMBL" id="AM295007">
    <property type="protein sequence ID" value="CAM30901.1"/>
    <property type="molecule type" value="Genomic_DNA"/>
</dbReference>
<dbReference type="RefSeq" id="WP_002985964.1">
    <property type="nucleotide sequence ID" value="NC_009332.1"/>
</dbReference>
<dbReference type="SMR" id="A2RGC2"/>
<dbReference type="KEGG" id="spf:SpyM51580"/>
<dbReference type="HOGENOM" id="CLU_044581_0_0_9"/>
<dbReference type="GO" id="GO:0005886">
    <property type="term" value="C:plasma membrane"/>
    <property type="evidence" value="ECO:0007669"/>
    <property type="project" value="UniProtKB-SubCell"/>
</dbReference>
<dbReference type="GO" id="GO:0005295">
    <property type="term" value="F:neutral L-amino acid:sodium symporter activity"/>
    <property type="evidence" value="ECO:0007669"/>
    <property type="project" value="TreeGrafter"/>
</dbReference>
<dbReference type="GO" id="GO:0032329">
    <property type="term" value="P:serine transport"/>
    <property type="evidence" value="ECO:0007669"/>
    <property type="project" value="InterPro"/>
</dbReference>
<dbReference type="GO" id="GO:0015826">
    <property type="term" value="P:threonine transport"/>
    <property type="evidence" value="ECO:0007669"/>
    <property type="project" value="InterPro"/>
</dbReference>
<dbReference type="FunFam" id="1.10.3860.10:FF:000003">
    <property type="entry name" value="Serine/threonine transporter sstT"/>
    <property type="match status" value="1"/>
</dbReference>
<dbReference type="Gene3D" id="1.10.3860.10">
    <property type="entry name" value="Sodium:dicarboxylate symporter"/>
    <property type="match status" value="1"/>
</dbReference>
<dbReference type="HAMAP" id="MF_01582">
    <property type="entry name" value="Ser_Thr_transp_SstT"/>
    <property type="match status" value="1"/>
</dbReference>
<dbReference type="InterPro" id="IPR001991">
    <property type="entry name" value="Na-dicarboxylate_symporter"/>
</dbReference>
<dbReference type="InterPro" id="IPR036458">
    <property type="entry name" value="Na:dicarbo_symporter_sf"/>
</dbReference>
<dbReference type="InterPro" id="IPR023025">
    <property type="entry name" value="Ser_Thr_transp_SstT"/>
</dbReference>
<dbReference type="NCBIfam" id="NF010151">
    <property type="entry name" value="PRK13628.1"/>
    <property type="match status" value="1"/>
</dbReference>
<dbReference type="PANTHER" id="PTHR42865">
    <property type="entry name" value="PROTON/GLUTAMATE-ASPARTATE SYMPORTER"/>
    <property type="match status" value="1"/>
</dbReference>
<dbReference type="PANTHER" id="PTHR42865:SF8">
    <property type="entry name" value="SERINE_THREONINE TRANSPORTER SSTT"/>
    <property type="match status" value="1"/>
</dbReference>
<dbReference type="Pfam" id="PF00375">
    <property type="entry name" value="SDF"/>
    <property type="match status" value="1"/>
</dbReference>
<dbReference type="PRINTS" id="PR00173">
    <property type="entry name" value="EDTRNSPORT"/>
</dbReference>
<dbReference type="SUPFAM" id="SSF118215">
    <property type="entry name" value="Proton glutamate symport protein"/>
    <property type="match status" value="1"/>
</dbReference>
<keyword id="KW-0029">Amino-acid transport</keyword>
<keyword id="KW-1003">Cell membrane</keyword>
<keyword id="KW-0472">Membrane</keyword>
<keyword id="KW-0769">Symport</keyword>
<keyword id="KW-0812">Transmembrane</keyword>
<keyword id="KW-1133">Transmembrane helix</keyword>
<keyword id="KW-0813">Transport</keyword>
<gene>
    <name evidence="1" type="primary">sstT</name>
    <name type="ordered locus">SpyM51580</name>
</gene>
<reference key="1">
    <citation type="journal article" date="2007" name="J. Bacteriol.">
        <title>Complete genome of acute rheumatic fever-associated serotype M5 Streptococcus pyogenes strain Manfredo.</title>
        <authorList>
            <person name="Holden M.T.G."/>
            <person name="Scott A."/>
            <person name="Cherevach I."/>
            <person name="Chillingworth T."/>
            <person name="Churcher C."/>
            <person name="Cronin A."/>
            <person name="Dowd L."/>
            <person name="Feltwell T."/>
            <person name="Hamlin N."/>
            <person name="Holroyd S."/>
            <person name="Jagels K."/>
            <person name="Moule S."/>
            <person name="Mungall K."/>
            <person name="Quail M.A."/>
            <person name="Price C."/>
            <person name="Rabbinowitsch E."/>
            <person name="Sharp S."/>
            <person name="Skelton J."/>
            <person name="Whitehead S."/>
            <person name="Barrell B.G."/>
            <person name="Kehoe M."/>
            <person name="Parkhill J."/>
        </authorList>
    </citation>
    <scope>NUCLEOTIDE SEQUENCE [LARGE SCALE GENOMIC DNA]</scope>
    <source>
        <strain>Manfredo</strain>
    </source>
</reference>
<organism>
    <name type="scientific">Streptococcus pyogenes serotype M5 (strain Manfredo)</name>
    <dbReference type="NCBI Taxonomy" id="160491"/>
    <lineage>
        <taxon>Bacteria</taxon>
        <taxon>Bacillati</taxon>
        <taxon>Bacillota</taxon>
        <taxon>Bacilli</taxon>
        <taxon>Lactobacillales</taxon>
        <taxon>Streptococcaceae</taxon>
        <taxon>Streptococcus</taxon>
    </lineage>
</organism>
<accession>A2RGC2</accession>
<comment type="function">
    <text evidence="1">Involved in the import of serine and threonine into the cell, with the concomitant import of sodium (symport system).</text>
</comment>
<comment type="catalytic activity">
    <reaction evidence="1">
        <text>L-serine(in) + Na(+)(in) = L-serine(out) + Na(+)(out)</text>
        <dbReference type="Rhea" id="RHEA:29575"/>
        <dbReference type="ChEBI" id="CHEBI:29101"/>
        <dbReference type="ChEBI" id="CHEBI:33384"/>
    </reaction>
    <physiologicalReaction direction="right-to-left" evidence="1">
        <dbReference type="Rhea" id="RHEA:29577"/>
    </physiologicalReaction>
</comment>
<comment type="catalytic activity">
    <reaction evidence="1">
        <text>L-threonine(in) + Na(+)(in) = L-threonine(out) + Na(+)(out)</text>
        <dbReference type="Rhea" id="RHEA:69999"/>
        <dbReference type="ChEBI" id="CHEBI:29101"/>
        <dbReference type="ChEBI" id="CHEBI:57926"/>
    </reaction>
    <physiologicalReaction direction="right-to-left" evidence="1">
        <dbReference type="Rhea" id="RHEA:70001"/>
    </physiologicalReaction>
</comment>
<comment type="subcellular location">
    <subcellularLocation>
        <location evidence="1">Cell membrane</location>
        <topology evidence="1">Multi-pass membrane protein</topology>
    </subcellularLocation>
</comment>
<comment type="similarity">
    <text evidence="1">Belongs to the dicarboxylate/amino acid:cation symporter (DAACS) (TC 2.A.23) family.</text>
</comment>
<proteinExistence type="inferred from homology"/>